<evidence type="ECO:0000250" key="1">
    <source>
        <dbReference type="UniProtKB" id="Q96N64"/>
    </source>
</evidence>
<evidence type="ECO:0000255" key="2">
    <source>
        <dbReference type="PROSITE-ProRule" id="PRU00162"/>
    </source>
</evidence>
<evidence type="ECO:0000256" key="3">
    <source>
        <dbReference type="SAM" id="MobiDB-lite"/>
    </source>
</evidence>
<evidence type="ECO:0000269" key="4">
    <source>
    </source>
</evidence>
<evidence type="ECO:0000269" key="5">
    <source>
    </source>
</evidence>
<evidence type="ECO:0000303" key="6">
    <source>
    </source>
</evidence>
<evidence type="ECO:0000305" key="7"/>
<organism>
    <name type="scientific">Mus musculus</name>
    <name type="common">Mouse</name>
    <dbReference type="NCBI Taxonomy" id="10090"/>
    <lineage>
        <taxon>Eukaryota</taxon>
        <taxon>Metazoa</taxon>
        <taxon>Chordata</taxon>
        <taxon>Craniata</taxon>
        <taxon>Vertebrata</taxon>
        <taxon>Euteleostomi</taxon>
        <taxon>Mammalia</taxon>
        <taxon>Eutheria</taxon>
        <taxon>Euarchontoglires</taxon>
        <taxon>Glires</taxon>
        <taxon>Rodentia</taxon>
        <taxon>Myomorpha</taxon>
        <taxon>Muroidea</taxon>
        <taxon>Muridae</taxon>
        <taxon>Murinae</taxon>
        <taxon>Mus</taxon>
        <taxon>Mus</taxon>
    </lineage>
</organism>
<keyword id="KW-0025">Alternative splicing</keyword>
<keyword id="KW-1017">Isopeptide bond</keyword>
<keyword id="KW-0539">Nucleus</keyword>
<keyword id="KW-0597">Phosphoprotein</keyword>
<keyword id="KW-1185">Reference proteome</keyword>
<keyword id="KW-0804">Transcription</keyword>
<keyword id="KW-0805">Transcription regulation</keyword>
<keyword id="KW-0832">Ubl conjugation</keyword>
<accession>Q69Z61</accession>
<accession>A2AJK9</accession>
<accession>A2AJL0</accession>
<accession>Q3TBG3</accession>
<accession>Q9CUT9</accession>
<gene>
    <name type="primary">Pwwp2a</name>
    <name type="synonym">Kiaa1935</name>
</gene>
<dbReference type="EMBL" id="AK173305">
    <property type="protein sequence ID" value="BAD32583.1"/>
    <property type="status" value="ALT_INIT"/>
    <property type="molecule type" value="mRNA"/>
</dbReference>
<dbReference type="EMBL" id="AL732633">
    <property type="protein sequence ID" value="CAM20714.1"/>
    <property type="molecule type" value="Genomic_DNA"/>
</dbReference>
<dbReference type="EMBL" id="AL732633">
    <property type="protein sequence ID" value="CAM20715.1"/>
    <property type="status" value="ALT_SEQ"/>
    <property type="molecule type" value="Genomic_DNA"/>
</dbReference>
<dbReference type="EMBL" id="AK014534">
    <property type="protein sequence ID" value="BAB29417.1"/>
    <property type="status" value="ALT_FRAME"/>
    <property type="molecule type" value="mRNA"/>
</dbReference>
<dbReference type="EMBL" id="AK171257">
    <property type="protein sequence ID" value="BAE42348.1"/>
    <property type="molecule type" value="mRNA"/>
</dbReference>
<dbReference type="CCDS" id="CCDS48773.1">
    <molecule id="Q69Z61-2"/>
</dbReference>
<dbReference type="CCDS" id="CCDS48774.1">
    <molecule id="Q69Z61-1"/>
</dbReference>
<dbReference type="RefSeq" id="NP_001157703.1">
    <molecule id="Q69Z61-2"/>
    <property type="nucleotide sequence ID" value="NM_001164231.2"/>
</dbReference>
<dbReference type="RefSeq" id="NP_081833.1">
    <molecule id="Q69Z61-1"/>
    <property type="nucleotide sequence ID" value="NM_027557.2"/>
</dbReference>
<dbReference type="SMR" id="Q69Z61"/>
<dbReference type="FunCoup" id="Q69Z61">
    <property type="interactions" value="4255"/>
</dbReference>
<dbReference type="STRING" id="10090.ENSMUSP00000054154"/>
<dbReference type="iPTMnet" id="Q69Z61"/>
<dbReference type="PhosphoSitePlus" id="Q69Z61"/>
<dbReference type="SwissPalm" id="Q69Z61"/>
<dbReference type="PaxDb" id="10090-ENSMUSP00000091852"/>
<dbReference type="PeptideAtlas" id="Q69Z61"/>
<dbReference type="ProteomicsDB" id="301851">
    <molecule id="Q69Z61-1"/>
</dbReference>
<dbReference type="ProteomicsDB" id="301852">
    <molecule id="Q69Z61-2"/>
</dbReference>
<dbReference type="Antibodypedia" id="28516">
    <property type="antibodies" value="34 antibodies from 15 providers"/>
</dbReference>
<dbReference type="Ensembl" id="ENSMUST00000061070.6">
    <molecule id="Q69Z61-1"/>
    <property type="protein sequence ID" value="ENSMUSP00000054154.6"/>
    <property type="gene ID" value="ENSMUSG00000044950.8"/>
</dbReference>
<dbReference type="Ensembl" id="ENSMUST00000094294.5">
    <molecule id="Q69Z61-2"/>
    <property type="protein sequence ID" value="ENSMUSP00000091852.5"/>
    <property type="gene ID" value="ENSMUSG00000044950.8"/>
</dbReference>
<dbReference type="GeneID" id="70802"/>
<dbReference type="KEGG" id="mmu:70802"/>
<dbReference type="UCSC" id="uc007imu.2">
    <molecule id="Q69Z61-1"/>
    <property type="organism name" value="mouse"/>
</dbReference>
<dbReference type="UCSC" id="uc007imv.2">
    <molecule id="Q69Z61-2"/>
    <property type="organism name" value="mouse"/>
</dbReference>
<dbReference type="AGR" id="MGI:1918052"/>
<dbReference type="CTD" id="114825"/>
<dbReference type="MGI" id="MGI:1918052">
    <property type="gene designation" value="Pwwp2a"/>
</dbReference>
<dbReference type="VEuPathDB" id="HostDB:ENSMUSG00000044950"/>
<dbReference type="eggNOG" id="ENOG502QU6V">
    <property type="taxonomic scope" value="Eukaryota"/>
</dbReference>
<dbReference type="GeneTree" id="ENSGT00940000157692"/>
<dbReference type="HOGENOM" id="CLU_020678_0_0_1"/>
<dbReference type="InParanoid" id="Q69Z61"/>
<dbReference type="OMA" id="KGSVMEC"/>
<dbReference type="OrthoDB" id="5964980at2759"/>
<dbReference type="PhylomeDB" id="Q69Z61"/>
<dbReference type="TreeFam" id="TF331271"/>
<dbReference type="BioGRID-ORCS" id="70802">
    <property type="hits" value="2 hits in 79 CRISPR screens"/>
</dbReference>
<dbReference type="ChiTaRS" id="Pwwp2a">
    <property type="organism name" value="mouse"/>
</dbReference>
<dbReference type="PRO" id="PR:Q69Z61"/>
<dbReference type="Proteomes" id="UP000000589">
    <property type="component" value="Chromosome 11"/>
</dbReference>
<dbReference type="RNAct" id="Q69Z61">
    <property type="molecule type" value="protein"/>
</dbReference>
<dbReference type="Bgee" id="ENSMUSG00000044950">
    <property type="expression patterns" value="Expressed in manus and 232 other cell types or tissues"/>
</dbReference>
<dbReference type="ExpressionAtlas" id="Q69Z61">
    <property type="expression patterns" value="baseline and differential"/>
</dbReference>
<dbReference type="GO" id="GO:0005634">
    <property type="term" value="C:nucleus"/>
    <property type="evidence" value="ECO:0000250"/>
    <property type="project" value="UniProtKB"/>
</dbReference>
<dbReference type="GO" id="GO:0003682">
    <property type="term" value="F:chromatin binding"/>
    <property type="evidence" value="ECO:0000250"/>
    <property type="project" value="UniProtKB"/>
</dbReference>
<dbReference type="GO" id="GO:0140003">
    <property type="term" value="F:histone H3K36me3 reader activity"/>
    <property type="evidence" value="ECO:0000250"/>
    <property type="project" value="UniProtKB"/>
</dbReference>
<dbReference type="GO" id="GO:0035064">
    <property type="term" value="F:methylated histone binding"/>
    <property type="evidence" value="ECO:0007669"/>
    <property type="project" value="Ensembl"/>
</dbReference>
<dbReference type="GO" id="GO:0120325">
    <property type="term" value="F:NuRD complex binding"/>
    <property type="evidence" value="ECO:0000250"/>
    <property type="project" value="UniProtKB"/>
</dbReference>
<dbReference type="GO" id="GO:0006338">
    <property type="term" value="P:chromatin remodeling"/>
    <property type="evidence" value="ECO:0000315"/>
    <property type="project" value="UniProtKB"/>
</dbReference>
<dbReference type="GO" id="GO:0032968">
    <property type="term" value="P:positive regulation of transcription elongation by RNA polymerase II"/>
    <property type="evidence" value="ECO:0000315"/>
    <property type="project" value="UniProtKB"/>
</dbReference>
<dbReference type="GO" id="GO:0001178">
    <property type="term" value="P:regulation of transcriptional start site selection at RNA polymerase II promoter"/>
    <property type="evidence" value="ECO:0000315"/>
    <property type="project" value="UniProtKB"/>
</dbReference>
<dbReference type="CDD" id="cd20152">
    <property type="entry name" value="PWWP_PWWP2A"/>
    <property type="match status" value="1"/>
</dbReference>
<dbReference type="FunFam" id="2.30.30.140:FF:000036">
    <property type="entry name" value="PWWP domain-containing protein 2A"/>
    <property type="match status" value="1"/>
</dbReference>
<dbReference type="Gene3D" id="2.30.30.140">
    <property type="match status" value="1"/>
</dbReference>
<dbReference type="InterPro" id="IPR000313">
    <property type="entry name" value="PWWP_dom"/>
</dbReference>
<dbReference type="PANTHER" id="PTHR48125:SF12">
    <property type="entry name" value="AT HOOK TRANSCRIPTION FACTOR FAMILY-RELATED"/>
    <property type="match status" value="1"/>
</dbReference>
<dbReference type="PANTHER" id="PTHR48125">
    <property type="entry name" value="LP07818P1"/>
    <property type="match status" value="1"/>
</dbReference>
<dbReference type="Pfam" id="PF00855">
    <property type="entry name" value="PWWP"/>
    <property type="match status" value="1"/>
</dbReference>
<dbReference type="SMART" id="SM00293">
    <property type="entry name" value="PWWP"/>
    <property type="match status" value="1"/>
</dbReference>
<dbReference type="SUPFAM" id="SSF63748">
    <property type="entry name" value="Tudor/PWWP/MBT"/>
    <property type="match status" value="1"/>
</dbReference>
<dbReference type="PROSITE" id="PS50812">
    <property type="entry name" value="PWWP"/>
    <property type="match status" value="1"/>
</dbReference>
<sequence length="730" mass="79388">MAAVAAEAAATAASPGEGGAGEAEPELEPIPGSEAGTPLPVTATEAAVPDGEADGRQSAPQADEQPLPPPPPPPPPGELADSSEAEEAKPPEPAAVPVSPPEQPPAAPEQPEDAPRPPPAPALVPPAGGDSAVSHLIPGSEVRVTLDHIIEDALVVSFRLGEKLFSGVLMDLSKRFGPHGIPVTVFPKREYKDKPDAMQLQSTTFQEGIEVKQEVNGAVPDDLSPVPPPERLWASKPPPLFHEGAPYPPPLFIRDTYNQSIPQPPPRKIKRPKRKMYREEPTSIMNAIKLRPRQVLCDKCKNSVVAEKKEIRKGSSDSSRYEDKKRRNDSVATVNKKLKTDHKVDGKNQNESQRRNTVVRVSSIAHSRGRVVKVSAQANTSKAQLNTKKVLQSKNMDHAKAREVLKIAKEKAQKKQSETSTSKTAHAKVHFTRRYQSPSSGSLPPRVRLKPQRYRNEENDSSLKTGLEKIRSGKLAPKPQSRCTSTRSAGEAPSEKPSPSEGPEESAGEVQDTSRVRVPGEQEELRMLGKKGSKSSISVYLTLNQETSDSSSASVCSIDSMDDLKSSNSECSSSESFVFPPGCMHAPSASSTSTSFSSKEENSLRNSLKMKIFSKNVSKCITPDGRTICVGDIVWAKIYGFPWWPARILTITVSRKDNGLLARQEARISWFASPTTSSLALSQLSPFLENFQLRFNKKRKGLYRRAITEAAKAAKQLTPEVRALLTQFET</sequence>
<proteinExistence type="evidence at transcript level"/>
<comment type="function">
    <text evidence="1 4 5">Chromatin-binding protein that acts as an adapter between distinct nucleosome components (H3K36me3 or H2A.Z) and chromatin-modifying complexes, contributing to the regulation of the levels of histone acetylation at actively transcribed genes (PubMed:30228260, PubMed:33235983). Competes with CHD4 and MBD3 for interaction with MTA1 to form a NuRD subcomplex, preventing the formation of full NuRD complex (containing CHD4 and MBD3), leading to recruitment of HDACs to gene promoters resulting in turn in the deacetylation of nearby H3K27 and H2A.Z (By similarity). Plays a role in facilitating transcriptional elongation and repression of spurious transcription initiation through regulation of histone acetylation (PubMed:30228260, PubMed:33235983). Essential for proper mitosis progression (By similarity).</text>
</comment>
<comment type="subunit">
    <text evidence="1">Component of a MTA1-specific subcomplex of the NuRD complex (M1HR), which is composed of PWWP2A, MTA1/2, HDAC1/2, and RBBP4/7 but does not contain CHD4 and MBD3 (By similarity). Interacts with MTA1; the interaction mediates the association of PWWP2A with the M1HR complex (By similarity). Interacts with H2A.Z/H2AZ1 (By similarity). Interacts (via PWWP domain) with histone H3 trimethylated at 'Lys-36' (H3K36me3) (By similarity). Does not interact with CHD4 and MBD3 (By similarity).</text>
</comment>
<comment type="subcellular location">
    <subcellularLocation>
        <location evidence="1">Nucleus</location>
    </subcellularLocation>
</comment>
<comment type="alternative products">
    <event type="alternative splicing"/>
    <isoform>
        <id>Q69Z61-1</id>
        <name>1</name>
        <sequence type="displayed"/>
    </isoform>
    <isoform>
        <id>Q69Z61-2</id>
        <name>2</name>
        <sequence type="described" ref="VSP_029549 VSP_029550 VSP_029551"/>
    </isoform>
</comment>
<comment type="sequence caution" evidence="7">
    <conflict type="frameshift">
        <sequence resource="EMBL-CDS" id="BAB29417"/>
    </conflict>
</comment>
<comment type="sequence caution" evidence="7">
    <conflict type="erroneous initiation">
        <sequence resource="EMBL-CDS" id="BAD32583"/>
    </conflict>
</comment>
<comment type="sequence caution" evidence="7">
    <conflict type="erroneous gene model prediction">
        <sequence resource="EMBL-CDS" id="CAM20715"/>
    </conflict>
</comment>
<reference key="1">
    <citation type="journal article" date="2004" name="DNA Res.">
        <title>Prediction of the coding sequences of mouse homologues of KIAA gene: IV. The complete nucleotide sequences of 500 mouse KIAA-homologous cDNAs identified by screening of terminal sequences of cDNA clones randomly sampled from size-fractionated libraries.</title>
        <authorList>
            <person name="Okazaki N."/>
            <person name="Kikuno R."/>
            <person name="Ohara R."/>
            <person name="Inamoto S."/>
            <person name="Koseki H."/>
            <person name="Hiraoka S."/>
            <person name="Saga Y."/>
            <person name="Seino S."/>
            <person name="Nishimura M."/>
            <person name="Kaisho T."/>
            <person name="Hoshino K."/>
            <person name="Kitamura H."/>
            <person name="Nagase T."/>
            <person name="Ohara O."/>
            <person name="Koga H."/>
        </authorList>
    </citation>
    <scope>NUCLEOTIDE SEQUENCE [LARGE SCALE MRNA] (ISOFORM 1)</scope>
    <source>
        <tissue>Embryonic tail</tissue>
    </source>
</reference>
<reference key="2">
    <citation type="journal article" date="2009" name="PLoS Biol.">
        <title>Lineage-specific biology revealed by a finished genome assembly of the mouse.</title>
        <authorList>
            <person name="Church D.M."/>
            <person name="Goodstadt L."/>
            <person name="Hillier L.W."/>
            <person name="Zody M.C."/>
            <person name="Goldstein S."/>
            <person name="She X."/>
            <person name="Bult C.J."/>
            <person name="Agarwala R."/>
            <person name="Cherry J.L."/>
            <person name="DiCuccio M."/>
            <person name="Hlavina W."/>
            <person name="Kapustin Y."/>
            <person name="Meric P."/>
            <person name="Maglott D."/>
            <person name="Birtle Z."/>
            <person name="Marques A.C."/>
            <person name="Graves T."/>
            <person name="Zhou S."/>
            <person name="Teague B."/>
            <person name="Potamousis K."/>
            <person name="Churas C."/>
            <person name="Place M."/>
            <person name="Herschleb J."/>
            <person name="Runnheim R."/>
            <person name="Forrest D."/>
            <person name="Amos-Landgraf J."/>
            <person name="Schwartz D.C."/>
            <person name="Cheng Z."/>
            <person name="Lindblad-Toh K."/>
            <person name="Eichler E.E."/>
            <person name="Ponting C.P."/>
        </authorList>
    </citation>
    <scope>NUCLEOTIDE SEQUENCE [LARGE SCALE GENOMIC DNA]</scope>
    <source>
        <strain>C57BL/6J</strain>
    </source>
</reference>
<reference key="3">
    <citation type="journal article" date="2005" name="Science">
        <title>The transcriptional landscape of the mammalian genome.</title>
        <authorList>
            <person name="Carninci P."/>
            <person name="Kasukawa T."/>
            <person name="Katayama S."/>
            <person name="Gough J."/>
            <person name="Frith M.C."/>
            <person name="Maeda N."/>
            <person name="Oyama R."/>
            <person name="Ravasi T."/>
            <person name="Lenhard B."/>
            <person name="Wells C."/>
            <person name="Kodzius R."/>
            <person name="Shimokawa K."/>
            <person name="Bajic V.B."/>
            <person name="Brenner S.E."/>
            <person name="Batalov S."/>
            <person name="Forrest A.R."/>
            <person name="Zavolan M."/>
            <person name="Davis M.J."/>
            <person name="Wilming L.G."/>
            <person name="Aidinis V."/>
            <person name="Allen J.E."/>
            <person name="Ambesi-Impiombato A."/>
            <person name="Apweiler R."/>
            <person name="Aturaliya R.N."/>
            <person name="Bailey T.L."/>
            <person name="Bansal M."/>
            <person name="Baxter L."/>
            <person name="Beisel K.W."/>
            <person name="Bersano T."/>
            <person name="Bono H."/>
            <person name="Chalk A.M."/>
            <person name="Chiu K.P."/>
            <person name="Choudhary V."/>
            <person name="Christoffels A."/>
            <person name="Clutterbuck D.R."/>
            <person name="Crowe M.L."/>
            <person name="Dalla E."/>
            <person name="Dalrymple B.P."/>
            <person name="de Bono B."/>
            <person name="Della Gatta G."/>
            <person name="di Bernardo D."/>
            <person name="Down T."/>
            <person name="Engstrom P."/>
            <person name="Fagiolini M."/>
            <person name="Faulkner G."/>
            <person name="Fletcher C.F."/>
            <person name="Fukushima T."/>
            <person name="Furuno M."/>
            <person name="Futaki S."/>
            <person name="Gariboldi M."/>
            <person name="Georgii-Hemming P."/>
            <person name="Gingeras T.R."/>
            <person name="Gojobori T."/>
            <person name="Green R.E."/>
            <person name="Gustincich S."/>
            <person name="Harbers M."/>
            <person name="Hayashi Y."/>
            <person name="Hensch T.K."/>
            <person name="Hirokawa N."/>
            <person name="Hill D."/>
            <person name="Huminiecki L."/>
            <person name="Iacono M."/>
            <person name="Ikeo K."/>
            <person name="Iwama A."/>
            <person name="Ishikawa T."/>
            <person name="Jakt M."/>
            <person name="Kanapin A."/>
            <person name="Katoh M."/>
            <person name="Kawasawa Y."/>
            <person name="Kelso J."/>
            <person name="Kitamura H."/>
            <person name="Kitano H."/>
            <person name="Kollias G."/>
            <person name="Krishnan S.P."/>
            <person name="Kruger A."/>
            <person name="Kummerfeld S.K."/>
            <person name="Kurochkin I.V."/>
            <person name="Lareau L.F."/>
            <person name="Lazarevic D."/>
            <person name="Lipovich L."/>
            <person name="Liu J."/>
            <person name="Liuni S."/>
            <person name="McWilliam S."/>
            <person name="Madan Babu M."/>
            <person name="Madera M."/>
            <person name="Marchionni L."/>
            <person name="Matsuda H."/>
            <person name="Matsuzawa S."/>
            <person name="Miki H."/>
            <person name="Mignone F."/>
            <person name="Miyake S."/>
            <person name="Morris K."/>
            <person name="Mottagui-Tabar S."/>
            <person name="Mulder N."/>
            <person name="Nakano N."/>
            <person name="Nakauchi H."/>
            <person name="Ng P."/>
            <person name="Nilsson R."/>
            <person name="Nishiguchi S."/>
            <person name="Nishikawa S."/>
            <person name="Nori F."/>
            <person name="Ohara O."/>
            <person name="Okazaki Y."/>
            <person name="Orlando V."/>
            <person name="Pang K.C."/>
            <person name="Pavan W.J."/>
            <person name="Pavesi G."/>
            <person name="Pesole G."/>
            <person name="Petrovsky N."/>
            <person name="Piazza S."/>
            <person name="Reed J."/>
            <person name="Reid J.F."/>
            <person name="Ring B.Z."/>
            <person name="Ringwald M."/>
            <person name="Rost B."/>
            <person name="Ruan Y."/>
            <person name="Salzberg S.L."/>
            <person name="Sandelin A."/>
            <person name="Schneider C."/>
            <person name="Schoenbach C."/>
            <person name="Sekiguchi K."/>
            <person name="Semple C.A."/>
            <person name="Seno S."/>
            <person name="Sessa L."/>
            <person name="Sheng Y."/>
            <person name="Shibata Y."/>
            <person name="Shimada H."/>
            <person name="Shimada K."/>
            <person name="Silva D."/>
            <person name="Sinclair B."/>
            <person name="Sperling S."/>
            <person name="Stupka E."/>
            <person name="Sugiura K."/>
            <person name="Sultana R."/>
            <person name="Takenaka Y."/>
            <person name="Taki K."/>
            <person name="Tammoja K."/>
            <person name="Tan S.L."/>
            <person name="Tang S."/>
            <person name="Taylor M.S."/>
            <person name="Tegner J."/>
            <person name="Teichmann S.A."/>
            <person name="Ueda H.R."/>
            <person name="van Nimwegen E."/>
            <person name="Verardo R."/>
            <person name="Wei C.L."/>
            <person name="Yagi K."/>
            <person name="Yamanishi H."/>
            <person name="Zabarovsky E."/>
            <person name="Zhu S."/>
            <person name="Zimmer A."/>
            <person name="Hide W."/>
            <person name="Bult C."/>
            <person name="Grimmond S.M."/>
            <person name="Teasdale R.D."/>
            <person name="Liu E.T."/>
            <person name="Brusic V."/>
            <person name="Quackenbush J."/>
            <person name="Wahlestedt C."/>
            <person name="Mattick J.S."/>
            <person name="Hume D.A."/>
            <person name="Kai C."/>
            <person name="Sasaki D."/>
            <person name="Tomaru Y."/>
            <person name="Fukuda S."/>
            <person name="Kanamori-Katayama M."/>
            <person name="Suzuki M."/>
            <person name="Aoki J."/>
            <person name="Arakawa T."/>
            <person name="Iida J."/>
            <person name="Imamura K."/>
            <person name="Itoh M."/>
            <person name="Kato T."/>
            <person name="Kawaji H."/>
            <person name="Kawagashira N."/>
            <person name="Kawashima T."/>
            <person name="Kojima M."/>
            <person name="Kondo S."/>
            <person name="Konno H."/>
            <person name="Nakano K."/>
            <person name="Ninomiya N."/>
            <person name="Nishio T."/>
            <person name="Okada M."/>
            <person name="Plessy C."/>
            <person name="Shibata K."/>
            <person name="Shiraki T."/>
            <person name="Suzuki S."/>
            <person name="Tagami M."/>
            <person name="Waki K."/>
            <person name="Watahiki A."/>
            <person name="Okamura-Oho Y."/>
            <person name="Suzuki H."/>
            <person name="Kawai J."/>
            <person name="Hayashizaki Y."/>
        </authorList>
    </citation>
    <scope>NUCLEOTIDE SEQUENCE [LARGE SCALE MRNA] OF 173-730 (ISOFORM 2)</scope>
    <scope>NUCLEOTIDE SEQUENCE [LARGE SCALE MRNA] OF 316-730 (ISOFORM 1)</scope>
    <source>
        <strain>C57BL/6J</strain>
        <strain>NOD</strain>
        <tissue>Skin</tissue>
    </source>
</reference>
<reference key="4">
    <citation type="journal article" date="2018" name="Nat. Commun.">
        <title>A variant NuRD complex containing PWWP2A/B excludes MBD2/3 to regulate transcription at active genes.</title>
        <authorList>
            <person name="Zhang T."/>
            <person name="Wei G."/>
            <person name="Millard C.J."/>
            <person name="Fischer R."/>
            <person name="Konietzny R."/>
            <person name="Kessler B.M."/>
            <person name="Schwabe J.W.R."/>
            <person name="Brockdorff N."/>
        </authorList>
    </citation>
    <scope>FUNCTION</scope>
</reference>
<reference key="5">
    <citation type="journal article" date="2020" name="IScience">
        <title>The PWWP2A Histone Deacetylase Complex Represses Intragenic Spurious Transcription Initiation in mESCs.</title>
        <authorList>
            <person name="Wei G."/>
            <person name="Brockdorff N."/>
            <person name="Zhang T."/>
        </authorList>
    </citation>
    <scope>FUNCTION</scope>
</reference>
<protein>
    <recommendedName>
        <fullName>PWWP domain-containing protein 2A</fullName>
    </recommendedName>
</protein>
<name>PWP2A_MOUSE</name>
<feature type="chain" id="PRO_0000311364" description="PWWP domain-containing protein 2A">
    <location>
        <begin position="1"/>
        <end position="730"/>
    </location>
</feature>
<feature type="domain" description="PWWP" evidence="2">
    <location>
        <begin position="630"/>
        <end position="690"/>
    </location>
</feature>
<feature type="region of interest" description="Disordered" evidence="3">
    <location>
        <begin position="1"/>
        <end position="134"/>
    </location>
</feature>
<feature type="region of interest" description="Interaction with HDAC1 and MTA1" evidence="1">
    <location>
        <begin position="128"/>
        <end position="346"/>
    </location>
</feature>
<feature type="region of interest" description="Disordered" evidence="3">
    <location>
        <begin position="257"/>
        <end position="276"/>
    </location>
</feature>
<feature type="region of interest" description="Disordered" evidence="3">
    <location>
        <begin position="311"/>
        <end position="355"/>
    </location>
</feature>
<feature type="region of interest" description="Interaction with the H2A.Z/H2AZ1" evidence="1">
    <location>
        <begin position="396"/>
        <end position="547"/>
    </location>
</feature>
<feature type="region of interest" description="Disordered" evidence="3">
    <location>
        <begin position="409"/>
        <end position="531"/>
    </location>
</feature>
<feature type="compositionally biased region" description="Low complexity" evidence="3">
    <location>
        <begin position="1"/>
        <end position="15"/>
    </location>
</feature>
<feature type="compositionally biased region" description="Pro residues" evidence="3">
    <location>
        <begin position="66"/>
        <end position="77"/>
    </location>
</feature>
<feature type="compositionally biased region" description="Pro residues" evidence="3">
    <location>
        <begin position="91"/>
        <end position="108"/>
    </location>
</feature>
<feature type="compositionally biased region" description="Basic residues" evidence="3">
    <location>
        <begin position="267"/>
        <end position="276"/>
    </location>
</feature>
<feature type="compositionally biased region" description="Basic and acidic residues" evidence="3">
    <location>
        <begin position="311"/>
        <end position="329"/>
    </location>
</feature>
<feature type="compositionally biased region" description="Basic and acidic residues" evidence="3">
    <location>
        <begin position="341"/>
        <end position="354"/>
    </location>
</feature>
<feature type="compositionally biased region" description="Low complexity" evidence="3">
    <location>
        <begin position="488"/>
        <end position="501"/>
    </location>
</feature>
<feature type="compositionally biased region" description="Basic and acidic residues" evidence="3">
    <location>
        <begin position="512"/>
        <end position="527"/>
    </location>
</feature>
<feature type="modified residue" description="Phosphoserine" evidence="1">
    <location>
        <position position="82"/>
    </location>
</feature>
<feature type="modified residue" description="Phosphoserine" evidence="1">
    <location>
        <position position="99"/>
    </location>
</feature>
<feature type="cross-link" description="Glycyl lysine isopeptide (Lys-Gly) (interchain with G-Cter in SUMO2)" evidence="1">
    <location>
        <position position="188"/>
    </location>
</feature>
<feature type="splice variant" id="VSP_029549" description="In isoform 2." evidence="6">
    <location>
        <begin position="491"/>
        <end position="529"/>
    </location>
</feature>
<feature type="splice variant" id="VSP_029550" description="In isoform 2." evidence="6">
    <original>KKGSKSSISVYLTLNQETSDSSSASVCSIDSMDDLKSSNSECS</original>
    <variation>LNKWQLLHQTVTSPAAPLQCLTDHCGFRLGALKLTVKRAAQRH</variation>
    <location>
        <begin position="530"/>
        <end position="572"/>
    </location>
</feature>
<feature type="splice variant" id="VSP_029551" description="In isoform 2." evidence="6">
    <location>
        <begin position="573"/>
        <end position="730"/>
    </location>
</feature>
<feature type="sequence conflict" description="In Ref. 3; BAE42348." evidence="7" ref="3">
    <original>S</original>
    <variation>A</variation>
    <location>
        <position position="173"/>
    </location>
</feature>
<feature type="sequence conflict" description="In Ref. 3; BAE42348." evidence="7" ref="3">
    <original>N</original>
    <variation>K</variation>
    <location>
        <position position="335"/>
    </location>
</feature>
<feature type="sequence conflict" description="In Ref. 3; BAB29417." evidence="7" ref="3">
    <original>E</original>
    <variation>D</variation>
    <location>
        <position position="521"/>
    </location>
</feature>
<feature type="sequence conflict" description="In Ref. 3; BAE42348." evidence="7" ref="3">
    <original>C</original>
    <variation>Y</variation>
    <location sequence="Q69Z61-2">
        <position position="510"/>
    </location>
</feature>